<evidence type="ECO:0000255" key="1"/>
<evidence type="ECO:0000255" key="2">
    <source>
        <dbReference type="PROSITE-ProRule" id="PRU00498"/>
    </source>
</evidence>
<evidence type="ECO:0000269" key="3">
    <source>
    </source>
</evidence>
<evidence type="ECO:0000269" key="4">
    <source>
    </source>
</evidence>
<evidence type="ECO:0000303" key="5">
    <source>
    </source>
</evidence>
<evidence type="ECO:0000305" key="6"/>
<evidence type="ECO:0000305" key="7">
    <source>
    </source>
</evidence>
<gene>
    <name evidence="5" type="primary">AQP3</name>
</gene>
<reference key="1">
    <citation type="journal article" date="2013" name="Bioinf. Biol. Insights">
        <title>The aquaporin channel repertoire of the tardigrade Milnesium tardigradum.</title>
        <authorList>
            <person name="Grohme M.A."/>
            <person name="Mali B."/>
            <person name="Welnicz W."/>
            <person name="Michel S."/>
            <person name="Schill R.O."/>
            <person name="Frohme M."/>
        </authorList>
    </citation>
    <scope>NUCLEOTIDE SEQUENCE [MRNA]</scope>
    <scope>DOMAIN</scope>
    <scope>INDUCTION</scope>
</reference>
<reference key="2">
    <citation type="journal article" date="2012" name="PLoS ONE">
        <title>Comparative proteome analysis of Milnesium tardigradum in early embryonic state versus adults in active and anhydrobiotic state.</title>
        <authorList>
            <person name="Schokraie E."/>
            <person name="Warnken U."/>
            <person name="Hotz-Wagenblatt A."/>
            <person name="Grohme M.A."/>
            <person name="Hengherr S."/>
            <person name="Foerster F."/>
            <person name="Schill R.O."/>
            <person name="Frohme M."/>
            <person name="Dandekar T."/>
            <person name="Schnoelzer M."/>
        </authorList>
    </citation>
    <scope>IDENTIFICATION BY MASS SPECTROMETRY</scope>
    <scope>INDUCTION</scope>
</reference>
<accession>G5CTG0</accession>
<feature type="chain" id="PRO_0000440204" description="Aquaporin-3">
    <location>
        <begin position="1"/>
        <end position="326"/>
    </location>
</feature>
<feature type="transmembrane region" description="Helical" evidence="1">
    <location>
        <begin position="24"/>
        <end position="44"/>
    </location>
</feature>
<feature type="transmembrane region" description="Helical" evidence="1">
    <location>
        <begin position="64"/>
        <end position="84"/>
    </location>
</feature>
<feature type="transmembrane region" description="Helical" evidence="1">
    <location>
        <begin position="107"/>
        <end position="127"/>
    </location>
</feature>
<feature type="transmembrane region" description="Helical" evidence="1">
    <location>
        <begin position="166"/>
        <end position="186"/>
    </location>
</feature>
<feature type="transmembrane region" description="Helical" evidence="1">
    <location>
        <begin position="196"/>
        <end position="216"/>
    </location>
</feature>
<feature type="transmembrane region" description="Helical" evidence="1">
    <location>
        <begin position="247"/>
        <end position="267"/>
    </location>
</feature>
<feature type="short sequence motif" description="NPA 1">
    <location>
        <begin position="88"/>
        <end position="90"/>
    </location>
</feature>
<feature type="short sequence motif" description="NPA 2">
    <location>
        <begin position="220"/>
        <end position="222"/>
    </location>
</feature>
<feature type="glycosylation site" description="N-linked (GlcNAc...) asparagine" evidence="2">
    <location>
        <position position="146"/>
    </location>
</feature>
<feature type="glycosylation site" description="N-linked (GlcNAc...) asparagine" evidence="2">
    <location>
        <position position="294"/>
    </location>
</feature>
<comment type="function">
    <text evidence="7">Aquaglyceroporin that may modulate the water content and osmolytes during anhydrobiosis (PubMed:23761966).</text>
</comment>
<comment type="subcellular location">
    <subcellularLocation>
        <location evidence="6">Cell membrane</location>
        <topology evidence="1">Multi-pass membrane protein</topology>
    </subcellularLocation>
</comment>
<comment type="induction">
    <text evidence="3 4">Expressed in early embryonic state, adult active, and adult anhydrobiotic state (PubMed:23029181). Transcript abundance is high and expression levels are completely unaffected by desiccation or rehydratation (PubMed:23761966).</text>
</comment>
<comment type="domain">
    <text evidence="7">Aquaporins contain two tandem repeats each containing three membrane-spanning domains and a pore-forming loop with the signature motif Asn-Pro-Ala (NPA).</text>
</comment>
<comment type="similarity">
    <text evidence="6">Belongs to the MIP/aquaporin (TC 1.A.8) family.</text>
</comment>
<proteinExistence type="evidence at protein level"/>
<sequence>MAISWRTWLKKTIHCDNSYVRTGLAEFLGTFLLVLLLNGMIITAHMSVRNADGTMAHPLNTAHLAFGGGLAVMVAVLVSGGISGAHLNPAVTTTMLVMGRLSPLKSLVYIFMQYMGAFFAASILYAVYFESILAYDYGERQVLGANGTAGWFATYPQEHISLVTQIFDAILGTGLLVMGIFAIIDPNNMAVPKGQIPLYVGFLISSLIFSFSYNAGAALNPARDLAPRLFLWVIGYGAEAFTARGHLWWLVPVIGPHVGGLLGGVTYQMFIGAHYQSDRKLKPATIMDEDDDTNATYNTITTTTHQKVYNGRRNFDESVPLKTVHA</sequence>
<organism>
    <name type="scientific">Milnesium tardigradum</name>
    <name type="common">Water bear</name>
    <name type="synonym">Tardigrade</name>
    <dbReference type="NCBI Taxonomy" id="46460"/>
    <lineage>
        <taxon>Eukaryota</taxon>
        <taxon>Metazoa</taxon>
        <taxon>Ecdysozoa</taxon>
        <taxon>Tardigrada</taxon>
        <taxon>Eutardigrada</taxon>
        <taxon>Apochela</taxon>
        <taxon>Milnesiidae</taxon>
        <taxon>Milnesium</taxon>
    </lineage>
</organism>
<dbReference type="EMBL" id="JN378738">
    <property type="protein sequence ID" value="AEP14557.1"/>
    <property type="molecule type" value="mRNA"/>
</dbReference>
<dbReference type="SMR" id="G5CTG0"/>
<dbReference type="GlyCosmos" id="G5CTG0">
    <property type="glycosylation" value="2 sites, No reported glycans"/>
</dbReference>
<dbReference type="GO" id="GO:0016323">
    <property type="term" value="C:basolateral plasma membrane"/>
    <property type="evidence" value="ECO:0007669"/>
    <property type="project" value="TreeGrafter"/>
</dbReference>
<dbReference type="GO" id="GO:0015254">
    <property type="term" value="F:glycerol channel activity"/>
    <property type="evidence" value="ECO:0007669"/>
    <property type="project" value="TreeGrafter"/>
</dbReference>
<dbReference type="GO" id="GO:0015166">
    <property type="term" value="F:polyol transmembrane transporter activity"/>
    <property type="evidence" value="ECO:0000250"/>
    <property type="project" value="UniProtKB"/>
</dbReference>
<dbReference type="GO" id="GO:0015250">
    <property type="term" value="F:water channel activity"/>
    <property type="evidence" value="ECO:0007669"/>
    <property type="project" value="TreeGrafter"/>
</dbReference>
<dbReference type="GO" id="GO:0015791">
    <property type="term" value="P:polyol transmembrane transport"/>
    <property type="evidence" value="ECO:0000250"/>
    <property type="project" value="UniProtKB"/>
</dbReference>
<dbReference type="Gene3D" id="1.20.1080.10">
    <property type="entry name" value="Glycerol uptake facilitator protein"/>
    <property type="match status" value="1"/>
</dbReference>
<dbReference type="InterPro" id="IPR023271">
    <property type="entry name" value="Aquaporin-like"/>
</dbReference>
<dbReference type="InterPro" id="IPR000425">
    <property type="entry name" value="MIP"/>
</dbReference>
<dbReference type="InterPro" id="IPR050363">
    <property type="entry name" value="MIP/Aquaporin"/>
</dbReference>
<dbReference type="NCBIfam" id="TIGR00861">
    <property type="entry name" value="MIP"/>
    <property type="match status" value="1"/>
</dbReference>
<dbReference type="PANTHER" id="PTHR43829">
    <property type="entry name" value="AQUAPORIN OR AQUAGLYCEROPORIN RELATED"/>
    <property type="match status" value="1"/>
</dbReference>
<dbReference type="PANTHER" id="PTHR43829:SF9">
    <property type="entry name" value="AQUAPORIN-9"/>
    <property type="match status" value="1"/>
</dbReference>
<dbReference type="Pfam" id="PF00230">
    <property type="entry name" value="MIP"/>
    <property type="match status" value="1"/>
</dbReference>
<dbReference type="PRINTS" id="PR00783">
    <property type="entry name" value="MINTRINSICP"/>
</dbReference>
<dbReference type="SUPFAM" id="SSF81338">
    <property type="entry name" value="Aquaporin-like"/>
    <property type="match status" value="1"/>
</dbReference>
<name>AQP3_MILTA</name>
<protein>
    <recommendedName>
        <fullName evidence="5">Aquaporin-3</fullName>
        <shortName evidence="5">AQP-3</shortName>
    </recommendedName>
</protein>
<keyword id="KW-1003">Cell membrane</keyword>
<keyword id="KW-0325">Glycoprotein</keyword>
<keyword id="KW-0472">Membrane</keyword>
<keyword id="KW-0677">Repeat</keyword>
<keyword id="KW-0346">Stress response</keyword>
<keyword id="KW-0812">Transmembrane</keyword>
<keyword id="KW-1133">Transmembrane helix</keyword>
<keyword id="KW-0813">Transport</keyword>